<sequence>MLHTLHRSPWLTDFAALLRLLSEGDELLLLQDGVTAAVDGNRYLESLRNAPIKVYALNEDLIARGLTGQISNDIILIDYTDFVRLTVKHPSQMAW</sequence>
<accession>P45530</accession>
<accession>Q2M708</accession>
<reference key="1">
    <citation type="journal article" date="1997" name="Science">
        <title>The complete genome sequence of Escherichia coli K-12.</title>
        <authorList>
            <person name="Blattner F.R."/>
            <person name="Plunkett G. III"/>
            <person name="Bloch C.A."/>
            <person name="Perna N.T."/>
            <person name="Burland V."/>
            <person name="Riley M."/>
            <person name="Collado-Vides J."/>
            <person name="Glasner J.D."/>
            <person name="Rode C.K."/>
            <person name="Mayhew G.F."/>
            <person name="Gregor J."/>
            <person name="Davis N.W."/>
            <person name="Kirkpatrick H.A."/>
            <person name="Goeden M.A."/>
            <person name="Rose D.J."/>
            <person name="Mau B."/>
            <person name="Shao Y."/>
        </authorList>
    </citation>
    <scope>NUCLEOTIDE SEQUENCE [LARGE SCALE GENOMIC DNA]</scope>
    <source>
        <strain>K12 / MG1655 / ATCC 47076</strain>
    </source>
</reference>
<reference key="2">
    <citation type="journal article" date="2006" name="Mol. Syst. Biol.">
        <title>Highly accurate genome sequences of Escherichia coli K-12 strains MG1655 and W3110.</title>
        <authorList>
            <person name="Hayashi K."/>
            <person name="Morooka N."/>
            <person name="Yamamoto Y."/>
            <person name="Fujita K."/>
            <person name="Isono K."/>
            <person name="Choi S."/>
            <person name="Ohtsubo E."/>
            <person name="Baba T."/>
            <person name="Wanner B.L."/>
            <person name="Mori H."/>
            <person name="Horiuchi T."/>
        </authorList>
    </citation>
    <scope>NUCLEOTIDE SEQUENCE [LARGE SCALE GENOMIC DNA]</scope>
    <source>
        <strain>K12 / W3110 / ATCC 27325 / DSM 5911</strain>
    </source>
</reference>
<reference key="3">
    <citation type="journal article" date="2006" name="Mol. Cell">
        <title>Mechanistic insights into sulfur relay by multiple sulfur mediators involved in thiouridine biosynthesis at tRNA wobble positions.</title>
        <authorList>
            <person name="Ikeuchi Y."/>
            <person name="Shigi N."/>
            <person name="Kato J."/>
            <person name="Nishimura A."/>
            <person name="Suzuki T."/>
        </authorList>
    </citation>
    <scope>FUNCTION</scope>
    <scope>SUBUNIT</scope>
</reference>
<reference key="4">
    <citation type="journal article" date="2006" name="Structure">
        <title>Structural basis for sulfur relay to RNA mediated by heterohexameric TusBCD complex.</title>
        <authorList>
            <person name="Numata T."/>
            <person name="Fukai S."/>
            <person name="Ikeuchi Y."/>
            <person name="Suzuki T."/>
            <person name="Nureki O."/>
        </authorList>
    </citation>
    <scope>X-RAY CRYSTALLOGRAPHY (2.15 ANGSTROMS)</scope>
    <scope>SUBUNIT</scope>
</reference>
<organism>
    <name type="scientific">Escherichia coli (strain K12)</name>
    <dbReference type="NCBI Taxonomy" id="83333"/>
    <lineage>
        <taxon>Bacteria</taxon>
        <taxon>Pseudomonadati</taxon>
        <taxon>Pseudomonadota</taxon>
        <taxon>Gammaproteobacteria</taxon>
        <taxon>Enterobacterales</taxon>
        <taxon>Enterobacteriaceae</taxon>
        <taxon>Escherichia</taxon>
    </lineage>
</organism>
<feature type="chain" id="PRO_0000169508" description="Protein TusB">
    <location>
        <begin position="1"/>
        <end position="95"/>
    </location>
</feature>
<feature type="strand" evidence="4">
    <location>
        <begin position="2"/>
        <end position="5"/>
    </location>
</feature>
<feature type="helix" evidence="4">
    <location>
        <begin position="9"/>
        <end position="11"/>
    </location>
</feature>
<feature type="helix" evidence="4">
    <location>
        <begin position="14"/>
        <end position="19"/>
    </location>
</feature>
<feature type="strand" evidence="4">
    <location>
        <begin position="26"/>
        <end position="29"/>
    </location>
</feature>
<feature type="helix" evidence="4">
    <location>
        <begin position="31"/>
        <end position="37"/>
    </location>
</feature>
<feature type="helix" evidence="4">
    <location>
        <begin position="44"/>
        <end position="48"/>
    </location>
</feature>
<feature type="strand" evidence="4">
    <location>
        <begin position="50"/>
        <end position="57"/>
    </location>
</feature>
<feature type="helix" evidence="4">
    <location>
        <begin position="58"/>
        <end position="63"/>
    </location>
</feature>
<feature type="strand" evidence="4">
    <location>
        <begin position="74"/>
        <end position="77"/>
    </location>
</feature>
<feature type="helix" evidence="4">
    <location>
        <begin position="79"/>
        <end position="88"/>
    </location>
</feature>
<feature type="strand" evidence="4">
    <location>
        <begin position="92"/>
        <end position="94"/>
    </location>
</feature>
<comment type="function">
    <text evidence="1">Part of a sulfur-relay system required for 2-thiolation of 5-methylaminomethyl-2-thiouridine (mnm(5)s(2)U) at tRNA wobble positions.</text>
</comment>
<comment type="subunit">
    <text evidence="1 2">Heterohexamer, formed by a dimer of trimers. The hexameric TusBCD complex contains 2 copies each of TusB, TusC and TusD. The TusBCD complex interacts with TusE.</text>
</comment>
<comment type="subcellular location">
    <subcellularLocation>
        <location evidence="3">Cytoplasm</location>
    </subcellularLocation>
</comment>
<comment type="similarity">
    <text evidence="3">Belongs to the DsrH/TusB family.</text>
</comment>
<protein>
    <recommendedName>
        <fullName>Protein TusB</fullName>
    </recommendedName>
    <alternativeName>
        <fullName>tRNA 2-thiouridine synthesizing protein B</fullName>
    </alternativeName>
</protein>
<proteinExistence type="evidence at protein level"/>
<evidence type="ECO:0000269" key="1">
    <source>
    </source>
</evidence>
<evidence type="ECO:0000269" key="2">
    <source>
    </source>
</evidence>
<evidence type="ECO:0000305" key="3"/>
<evidence type="ECO:0007829" key="4">
    <source>
        <dbReference type="PDB" id="2D1P"/>
    </source>
</evidence>
<gene>
    <name type="primary">tusB</name>
    <name type="synonym">yheL</name>
    <name type="ordered locus">b3343</name>
    <name type="ordered locus">JW3305</name>
</gene>
<dbReference type="EMBL" id="U18997">
    <property type="protein sequence ID" value="AAA58140.1"/>
    <property type="molecule type" value="Genomic_DNA"/>
</dbReference>
<dbReference type="EMBL" id="U00096">
    <property type="protein sequence ID" value="AAC76368.1"/>
    <property type="molecule type" value="Genomic_DNA"/>
</dbReference>
<dbReference type="EMBL" id="AP009048">
    <property type="protein sequence ID" value="BAE77948.1"/>
    <property type="molecule type" value="Genomic_DNA"/>
</dbReference>
<dbReference type="PIR" id="B65128">
    <property type="entry name" value="B65128"/>
</dbReference>
<dbReference type="RefSeq" id="NP_417802.1">
    <property type="nucleotide sequence ID" value="NC_000913.3"/>
</dbReference>
<dbReference type="RefSeq" id="WP_000903373.1">
    <property type="nucleotide sequence ID" value="NZ_SSZK01000008.1"/>
</dbReference>
<dbReference type="PDB" id="2D1P">
    <property type="method" value="X-ray"/>
    <property type="resolution" value="2.15 A"/>
    <property type="chains" value="C/F/I=1-95"/>
</dbReference>
<dbReference type="PDBsum" id="2D1P"/>
<dbReference type="SMR" id="P45530"/>
<dbReference type="BioGRID" id="4261617">
    <property type="interactions" value="51"/>
</dbReference>
<dbReference type="ComplexPortal" id="CPX-2144">
    <property type="entry name" value="TusBCDE complex"/>
</dbReference>
<dbReference type="DIP" id="DIP-12308N"/>
<dbReference type="FunCoup" id="P45530">
    <property type="interactions" value="39"/>
</dbReference>
<dbReference type="IntAct" id="P45530">
    <property type="interactions" value="3"/>
</dbReference>
<dbReference type="STRING" id="511145.b3343"/>
<dbReference type="jPOST" id="P45530"/>
<dbReference type="PaxDb" id="511145-b3343"/>
<dbReference type="EnsemblBacteria" id="AAC76368">
    <property type="protein sequence ID" value="AAC76368"/>
    <property type="gene ID" value="b3343"/>
</dbReference>
<dbReference type="GeneID" id="947844"/>
<dbReference type="KEGG" id="ecj:JW3305"/>
<dbReference type="KEGG" id="eco:b3343"/>
<dbReference type="KEGG" id="ecoc:C3026_18155"/>
<dbReference type="PATRIC" id="fig|1411691.4.peg.3388"/>
<dbReference type="EchoBASE" id="EB2733"/>
<dbReference type="eggNOG" id="COG2168">
    <property type="taxonomic scope" value="Bacteria"/>
</dbReference>
<dbReference type="HOGENOM" id="CLU_166087_2_1_6"/>
<dbReference type="InParanoid" id="P45530"/>
<dbReference type="OMA" id="MLHTINK"/>
<dbReference type="OrthoDB" id="9795117at2"/>
<dbReference type="PhylomeDB" id="P45530"/>
<dbReference type="BioCyc" id="EcoCyc:G7712-MONOMER"/>
<dbReference type="BioCyc" id="MetaCyc:G7712-MONOMER"/>
<dbReference type="EvolutionaryTrace" id="P45530"/>
<dbReference type="PRO" id="PR:P45530"/>
<dbReference type="Proteomes" id="UP000000625">
    <property type="component" value="Chromosome"/>
</dbReference>
<dbReference type="GO" id="GO:1990228">
    <property type="term" value="C:sulfurtransferase complex"/>
    <property type="evidence" value="ECO:0000314"/>
    <property type="project" value="EcoCyc"/>
</dbReference>
<dbReference type="GO" id="GO:0002143">
    <property type="term" value="P:tRNA wobble position uridine thiolation"/>
    <property type="evidence" value="ECO:0000314"/>
    <property type="project" value="ComplexPortal"/>
</dbReference>
<dbReference type="FunFam" id="3.40.1260.10:FF:000002">
    <property type="entry name" value="Sulfurtransferase TusB"/>
    <property type="match status" value="1"/>
</dbReference>
<dbReference type="Gene3D" id="3.40.1260.10">
    <property type="entry name" value="DsrEFH-like"/>
    <property type="match status" value="1"/>
</dbReference>
<dbReference type="HAMAP" id="MF_01564">
    <property type="entry name" value="Thiourid_synth_B"/>
    <property type="match status" value="1"/>
</dbReference>
<dbReference type="InterPro" id="IPR027396">
    <property type="entry name" value="DsrEFH-like"/>
</dbReference>
<dbReference type="InterPro" id="IPR023526">
    <property type="entry name" value="Sulphur_relay_TusB"/>
</dbReference>
<dbReference type="InterPro" id="IPR007215">
    <property type="entry name" value="Sulphur_relay_TusB/DsrH"/>
</dbReference>
<dbReference type="NCBIfam" id="NF010035">
    <property type="entry name" value="PRK13510.1"/>
    <property type="match status" value="1"/>
</dbReference>
<dbReference type="NCBIfam" id="TIGR03011">
    <property type="entry name" value="sulf_tusB_dsrH"/>
    <property type="match status" value="1"/>
</dbReference>
<dbReference type="PANTHER" id="PTHR37526">
    <property type="entry name" value="PROTEIN TUSB"/>
    <property type="match status" value="1"/>
</dbReference>
<dbReference type="PANTHER" id="PTHR37526:SF1">
    <property type="entry name" value="PROTEIN TUSB"/>
    <property type="match status" value="1"/>
</dbReference>
<dbReference type="Pfam" id="PF04077">
    <property type="entry name" value="DsrH"/>
    <property type="match status" value="1"/>
</dbReference>
<dbReference type="SUPFAM" id="SSF75169">
    <property type="entry name" value="DsrEFH-like"/>
    <property type="match status" value="1"/>
</dbReference>
<name>TUSB_ECOLI</name>
<keyword id="KW-0002">3D-structure</keyword>
<keyword id="KW-0963">Cytoplasm</keyword>
<keyword id="KW-1185">Reference proteome</keyword>
<keyword id="KW-0819">tRNA processing</keyword>